<reference key="1">
    <citation type="journal article" date="1998" name="Nature">
        <title>The complete genome of the hyperthermophilic bacterium Aquifex aeolicus.</title>
        <authorList>
            <person name="Deckert G."/>
            <person name="Warren P.V."/>
            <person name="Gaasterland T."/>
            <person name="Young W.G."/>
            <person name="Lenox A.L."/>
            <person name="Graham D.E."/>
            <person name="Overbeek R."/>
            <person name="Snead M.A."/>
            <person name="Keller M."/>
            <person name="Aujay M."/>
            <person name="Huber R."/>
            <person name="Feldman R.A."/>
            <person name="Short J.M."/>
            <person name="Olsen G.J."/>
            <person name="Swanson R.V."/>
        </authorList>
    </citation>
    <scope>NUCLEOTIDE SEQUENCE [LARGE SCALE GENOMIC DNA]</scope>
    <source>
        <strain>VF5</strain>
    </source>
</reference>
<gene>
    <name type="ordered locus">aq_615</name>
</gene>
<dbReference type="EMBL" id="AE000657">
    <property type="protein sequence ID" value="AAC06830.1"/>
    <property type="molecule type" value="Genomic_DNA"/>
</dbReference>
<dbReference type="PIR" id="G70354">
    <property type="entry name" value="G70354"/>
</dbReference>
<dbReference type="RefSeq" id="NP_213427.1">
    <property type="nucleotide sequence ID" value="NC_000918.1"/>
</dbReference>
<dbReference type="RefSeq" id="WP_010880365.1">
    <property type="nucleotide sequence ID" value="NC_000918.1"/>
</dbReference>
<dbReference type="STRING" id="224324.aq_615"/>
<dbReference type="EnsemblBacteria" id="AAC06830">
    <property type="protein sequence ID" value="AAC06830"/>
    <property type="gene ID" value="aq_615"/>
</dbReference>
<dbReference type="KEGG" id="aae:aq_615"/>
<dbReference type="eggNOG" id="ENOG5033340">
    <property type="taxonomic scope" value="Bacteria"/>
</dbReference>
<dbReference type="HOGENOM" id="CLU_150578_0_0_0"/>
<dbReference type="InParanoid" id="O66867"/>
<dbReference type="OrthoDB" id="9808743at2"/>
<dbReference type="Proteomes" id="UP000000798">
    <property type="component" value="Chromosome"/>
</dbReference>
<dbReference type="GO" id="GO:0005886">
    <property type="term" value="C:plasma membrane"/>
    <property type="evidence" value="ECO:0007669"/>
    <property type="project" value="UniProtKB-SubCell"/>
</dbReference>
<dbReference type="InterPro" id="IPR027367">
    <property type="entry name" value="Gly-zipper_YMGG"/>
</dbReference>
<dbReference type="Pfam" id="PF13441">
    <property type="entry name" value="Gly-zipper_YMGG"/>
    <property type="match status" value="1"/>
</dbReference>
<dbReference type="PROSITE" id="PS51257">
    <property type="entry name" value="PROKAR_LIPOPROTEIN"/>
    <property type="match status" value="1"/>
</dbReference>
<name>Y615_AQUAE</name>
<protein>
    <recommendedName>
        <fullName>Uncharacterized lipoprotein aq_615</fullName>
    </recommendedName>
</protein>
<sequence>MKKALFLVGLVFTAGVISSCGGVSSQRTYEGAAVGAAVGAAAGVLLDKENRWRGGVIGAALGAILGGTITEIAQRAAKEAAQNNKPVVYRAEDGSQMVRAEPVEKRGNCTLVKTKYYQNGKLVKVEEKEVCE</sequence>
<evidence type="ECO:0000255" key="1">
    <source>
        <dbReference type="PROSITE-ProRule" id="PRU00303"/>
    </source>
</evidence>
<keyword id="KW-1003">Cell membrane</keyword>
<keyword id="KW-0449">Lipoprotein</keyword>
<keyword id="KW-0472">Membrane</keyword>
<keyword id="KW-0564">Palmitate</keyword>
<keyword id="KW-1185">Reference proteome</keyword>
<keyword id="KW-0732">Signal</keyword>
<organism>
    <name type="scientific">Aquifex aeolicus (strain VF5)</name>
    <dbReference type="NCBI Taxonomy" id="224324"/>
    <lineage>
        <taxon>Bacteria</taxon>
        <taxon>Pseudomonadati</taxon>
        <taxon>Aquificota</taxon>
        <taxon>Aquificia</taxon>
        <taxon>Aquificales</taxon>
        <taxon>Aquificaceae</taxon>
        <taxon>Aquifex</taxon>
    </lineage>
</organism>
<accession>O66867</accession>
<proteinExistence type="inferred from homology"/>
<feature type="signal peptide" evidence="1">
    <location>
        <begin position="1"/>
        <end position="19"/>
    </location>
</feature>
<feature type="chain" id="PRO_0000013615" description="Uncharacterized lipoprotein aq_615">
    <location>
        <begin position="20"/>
        <end position="132"/>
    </location>
</feature>
<feature type="lipid moiety-binding region" description="N-palmitoyl cysteine" evidence="1">
    <location>
        <position position="20"/>
    </location>
</feature>
<feature type="lipid moiety-binding region" description="S-diacylglycerol cysteine" evidence="1">
    <location>
        <position position="20"/>
    </location>
</feature>
<comment type="subcellular location">
    <subcellularLocation>
        <location evidence="1">Cell membrane</location>
        <topology evidence="1">Lipid-anchor</topology>
    </subcellularLocation>
</comment>